<keyword id="KW-0004">4Fe-4S</keyword>
<keyword id="KW-0256">Endoplasmic reticulum</keyword>
<keyword id="KW-0408">Iron</keyword>
<keyword id="KW-0411">Iron-sulfur</keyword>
<keyword id="KW-0472">Membrane</keyword>
<keyword id="KW-0479">Metal-binding</keyword>
<keyword id="KW-1185">Reference proteome</keyword>
<keyword id="KW-0949">S-adenosyl-L-methionine</keyword>
<keyword id="KW-0808">Transferase</keyword>
<keyword id="KW-0812">Transmembrane</keyword>
<keyword id="KW-1133">Transmembrane helix</keyword>
<keyword id="KW-0819">tRNA processing</keyword>
<organism>
    <name type="scientific">Xenopus laevis</name>
    <name type="common">African clawed frog</name>
    <dbReference type="NCBI Taxonomy" id="8355"/>
    <lineage>
        <taxon>Eukaryota</taxon>
        <taxon>Metazoa</taxon>
        <taxon>Chordata</taxon>
        <taxon>Craniata</taxon>
        <taxon>Vertebrata</taxon>
        <taxon>Euteleostomi</taxon>
        <taxon>Amphibia</taxon>
        <taxon>Batrachia</taxon>
        <taxon>Anura</taxon>
        <taxon>Pipoidea</taxon>
        <taxon>Pipidae</taxon>
        <taxon>Xenopodinae</taxon>
        <taxon>Xenopus</taxon>
        <taxon>Xenopus</taxon>
    </lineage>
</organism>
<sequence length="556" mass="62906">MPAVCESLLDDIEDMVSATDPKPHDRQSARKNIVPRARKRNKNNIQEEEPPADSTIPGTQKIWIRTWGCSHNNSDGEYMAGQLAAYGYSITEQPEKADLWLLNSCTVKSPAEDHFRNSIKKAQEANKKVVVSGCVPQAQPRQDYMKGLSIIGVQQIDRVVEVVEETIKGHSVRLLGQKKDNGKRLGGARLDLPKIRKNPLIEIISINTGCLNACTYCKTKHARGELASYPVEELVDRATQSFQEGVCEIWLTSEDTGAYGRDIGTDLPTLLWKLVEVIPEGAMLRLGMTNPPYILEHLEEMAKILNHPRVYAFLHIPVQSASDSVLMDMKREYCIADFKRVVDFLKERVPGITIATDIICGFPGETDEDFKETLKLVEEYKFPSLFINQFYPRPGTPAAKMEQVLAHVKKRRTKELSQLFHSYDPYDHKIGQKQQVLVTEESFDSQYYVAHNRFYEQVLVPKDPDFMGKMVEVKIFEAGKHFMKGQPVQDSYIYTPSITKPLAKGEVSGLTEELKPPNNIPKSETLLEKHWERLQVFLFLTALLAAVIAFVGTKLV</sequence>
<dbReference type="EC" id="2.8.4.5" evidence="2"/>
<dbReference type="EMBL" id="BC070521">
    <property type="protein sequence ID" value="AAH70521.1"/>
    <property type="molecule type" value="mRNA"/>
</dbReference>
<dbReference type="RefSeq" id="NP_001084956.1">
    <property type="nucleotide sequence ID" value="NM_001091487.1"/>
</dbReference>
<dbReference type="SMR" id="Q6NS26"/>
<dbReference type="DNASU" id="432014"/>
<dbReference type="GeneID" id="432014"/>
<dbReference type="KEGG" id="xla:432014"/>
<dbReference type="AGR" id="Xenbase:XB-GENE-5895849"/>
<dbReference type="CTD" id="432014"/>
<dbReference type="Xenbase" id="XB-GENE-5895849">
    <property type="gene designation" value="cdkal1.S"/>
</dbReference>
<dbReference type="OrthoDB" id="1730074at2759"/>
<dbReference type="Proteomes" id="UP000186698">
    <property type="component" value="Chromosome 6S"/>
</dbReference>
<dbReference type="Bgee" id="432014">
    <property type="expression patterns" value="Expressed in gastrula and 19 other cell types or tissues"/>
</dbReference>
<dbReference type="GO" id="GO:0005783">
    <property type="term" value="C:endoplasmic reticulum"/>
    <property type="evidence" value="ECO:0000318"/>
    <property type="project" value="GO_Central"/>
</dbReference>
<dbReference type="GO" id="GO:0005789">
    <property type="term" value="C:endoplasmic reticulum membrane"/>
    <property type="evidence" value="ECO:0007669"/>
    <property type="project" value="UniProtKB-SubCell"/>
</dbReference>
<dbReference type="GO" id="GO:0051539">
    <property type="term" value="F:4 iron, 4 sulfur cluster binding"/>
    <property type="evidence" value="ECO:0007669"/>
    <property type="project" value="UniProtKB-KW"/>
</dbReference>
<dbReference type="GO" id="GO:0046872">
    <property type="term" value="F:metal ion binding"/>
    <property type="evidence" value="ECO:0007669"/>
    <property type="project" value="UniProtKB-KW"/>
</dbReference>
<dbReference type="GO" id="GO:0035598">
    <property type="term" value="F:N6-threonylcarbomyladenosine methylthiotransferase activity"/>
    <property type="evidence" value="ECO:0000318"/>
    <property type="project" value="GO_Central"/>
</dbReference>
<dbReference type="GO" id="GO:0061712">
    <property type="term" value="F:tRNA (N(6)-L-threonylcarbamoyladenosine(37)-C(2))-methylthiotransferase"/>
    <property type="evidence" value="ECO:0007669"/>
    <property type="project" value="UniProtKB-EC"/>
</dbReference>
<dbReference type="GO" id="GO:0035600">
    <property type="term" value="P:tRNA methylthiolation"/>
    <property type="evidence" value="ECO:0000318"/>
    <property type="project" value="GO_Central"/>
</dbReference>
<dbReference type="CDD" id="cd01335">
    <property type="entry name" value="Radical_SAM"/>
    <property type="match status" value="1"/>
</dbReference>
<dbReference type="FunFam" id="3.40.50.12160:FF:000005">
    <property type="entry name" value="threonylcarbamoyladenosine tRNA methylthiotransferase isoform X1"/>
    <property type="match status" value="1"/>
</dbReference>
<dbReference type="FunFam" id="3.80.30.20:FF:000002">
    <property type="entry name" value="threonylcarbamoyladenosine tRNA methylthiotransferase isoform X2"/>
    <property type="match status" value="1"/>
</dbReference>
<dbReference type="Gene3D" id="3.40.50.12160">
    <property type="entry name" value="Methylthiotransferase, N-terminal domain"/>
    <property type="match status" value="1"/>
</dbReference>
<dbReference type="Gene3D" id="3.80.30.20">
    <property type="entry name" value="tm_1862 like domain"/>
    <property type="match status" value="1"/>
</dbReference>
<dbReference type="InterPro" id="IPR006638">
    <property type="entry name" value="Elp3/MiaA/NifB-like_rSAM"/>
</dbReference>
<dbReference type="InterPro" id="IPR005839">
    <property type="entry name" value="Methylthiotransferase"/>
</dbReference>
<dbReference type="InterPro" id="IPR020612">
    <property type="entry name" value="Methylthiotransferase_CS"/>
</dbReference>
<dbReference type="InterPro" id="IPR013848">
    <property type="entry name" value="Methylthiotransferase_N"/>
</dbReference>
<dbReference type="InterPro" id="IPR038135">
    <property type="entry name" value="Methylthiotransferase_N_sf"/>
</dbReference>
<dbReference type="InterPro" id="IPR006466">
    <property type="entry name" value="MiaB-like_arc_euk"/>
</dbReference>
<dbReference type="InterPro" id="IPR007197">
    <property type="entry name" value="rSAM"/>
</dbReference>
<dbReference type="InterPro" id="IPR023404">
    <property type="entry name" value="rSAM_horseshoe"/>
</dbReference>
<dbReference type="InterPro" id="IPR002792">
    <property type="entry name" value="TRAM_dom"/>
</dbReference>
<dbReference type="NCBIfam" id="TIGR01578">
    <property type="entry name" value="MiaB-like-B"/>
    <property type="match status" value="1"/>
</dbReference>
<dbReference type="NCBIfam" id="TIGR00089">
    <property type="entry name" value="MiaB/RimO family radical SAM methylthiotransferase"/>
    <property type="match status" value="1"/>
</dbReference>
<dbReference type="PANTHER" id="PTHR11918">
    <property type="entry name" value="RADICAL SAM PROTEINS"/>
    <property type="match status" value="1"/>
</dbReference>
<dbReference type="PANTHER" id="PTHR11918:SF45">
    <property type="entry name" value="THREONYLCARBAMOYLADENOSINE TRNA METHYLTHIOTRANSFERASE"/>
    <property type="match status" value="1"/>
</dbReference>
<dbReference type="Pfam" id="PF04055">
    <property type="entry name" value="Radical_SAM"/>
    <property type="match status" value="1"/>
</dbReference>
<dbReference type="Pfam" id="PF01938">
    <property type="entry name" value="TRAM"/>
    <property type="match status" value="1"/>
</dbReference>
<dbReference type="Pfam" id="PF00919">
    <property type="entry name" value="UPF0004"/>
    <property type="match status" value="1"/>
</dbReference>
<dbReference type="SFLD" id="SFLDG01082">
    <property type="entry name" value="B12-binding_domain_containing"/>
    <property type="match status" value="1"/>
</dbReference>
<dbReference type="SFLD" id="SFLDG01061">
    <property type="entry name" value="methylthiotransferase"/>
    <property type="match status" value="1"/>
</dbReference>
<dbReference type="SFLD" id="SFLDS00029">
    <property type="entry name" value="Radical_SAM"/>
    <property type="match status" value="1"/>
</dbReference>
<dbReference type="SMART" id="SM00729">
    <property type="entry name" value="Elp3"/>
    <property type="match status" value="1"/>
</dbReference>
<dbReference type="SUPFAM" id="SSF102114">
    <property type="entry name" value="Radical SAM enzymes"/>
    <property type="match status" value="1"/>
</dbReference>
<dbReference type="PROSITE" id="PS51449">
    <property type="entry name" value="MTTASE_N"/>
    <property type="match status" value="1"/>
</dbReference>
<dbReference type="PROSITE" id="PS01278">
    <property type="entry name" value="MTTASE_RADICAL"/>
    <property type="match status" value="1"/>
</dbReference>
<dbReference type="PROSITE" id="PS51918">
    <property type="entry name" value="RADICAL_SAM"/>
    <property type="match status" value="1"/>
</dbReference>
<dbReference type="PROSITE" id="PS50926">
    <property type="entry name" value="TRAM"/>
    <property type="match status" value="1"/>
</dbReference>
<proteinExistence type="evidence at transcript level"/>
<comment type="function">
    <text evidence="2">Catalyzes the methylthiolation of N6-threonylcarbamoyladenosine (t(6)A), leading to the formation of 2-methylthio-N6-threonylcarbamoyladenosine (ms(2)t(6)A) at position 37 in tRNAs that read codons beginning with adenine.</text>
</comment>
<comment type="catalytic activity">
    <reaction evidence="2">
        <text>N(6)-L-threonylcarbamoyladenosine(37) in tRNA + (sulfur carrier)-SH + AH2 + 2 S-adenosyl-L-methionine = 2-methylsulfanyl-N(6)-L-threonylcarbamoyladenosine(37) in tRNA + (sulfur carrier)-H + 5'-deoxyadenosine + L-methionine + A + S-adenosyl-L-homocysteine + 2 H(+)</text>
        <dbReference type="Rhea" id="RHEA:37075"/>
        <dbReference type="Rhea" id="RHEA-COMP:10163"/>
        <dbReference type="Rhea" id="RHEA-COMP:11092"/>
        <dbReference type="Rhea" id="RHEA-COMP:14737"/>
        <dbReference type="Rhea" id="RHEA-COMP:14739"/>
        <dbReference type="ChEBI" id="CHEBI:13193"/>
        <dbReference type="ChEBI" id="CHEBI:15378"/>
        <dbReference type="ChEBI" id="CHEBI:17319"/>
        <dbReference type="ChEBI" id="CHEBI:17499"/>
        <dbReference type="ChEBI" id="CHEBI:29917"/>
        <dbReference type="ChEBI" id="CHEBI:57844"/>
        <dbReference type="ChEBI" id="CHEBI:57856"/>
        <dbReference type="ChEBI" id="CHEBI:59789"/>
        <dbReference type="ChEBI" id="CHEBI:64428"/>
        <dbReference type="ChEBI" id="CHEBI:74418"/>
        <dbReference type="ChEBI" id="CHEBI:74420"/>
        <dbReference type="EC" id="2.8.4.5"/>
    </reaction>
</comment>
<comment type="cofactor">
    <cofactor evidence="5">
        <name>[4Fe-4S] cluster</name>
        <dbReference type="ChEBI" id="CHEBI:49883"/>
    </cofactor>
    <text evidence="5">Binds 2 [4Fe-4S] clusters. One cluster is coordinated with 3 cysteines and an exchangeable S-adenosyl-L-methionine.</text>
</comment>
<comment type="subcellular location">
    <subcellularLocation>
        <location evidence="1">Endoplasmic reticulum membrane</location>
        <topology evidence="3">Single-pass membrane protein</topology>
    </subcellularLocation>
</comment>
<comment type="similarity">
    <text evidence="8">Belongs to the methylthiotransferase family. CDKAL1 subfamily.</text>
</comment>
<accession>Q6NS26</accession>
<reference key="1">
    <citation type="submission" date="2004-05" db="EMBL/GenBank/DDBJ databases">
        <authorList>
            <consortium name="NIH - Xenopus Gene Collection (XGC) project"/>
        </authorList>
    </citation>
    <scope>NUCLEOTIDE SEQUENCE [LARGE SCALE MRNA]</scope>
    <source>
        <tissue>Embryo</tissue>
    </source>
</reference>
<feature type="chain" id="PRO_0000298673" description="Threonylcarbamoyladenosine tRNA methylthiotransferase">
    <location>
        <begin position="1"/>
        <end position="556"/>
    </location>
</feature>
<feature type="transmembrane region" description="Helical" evidence="3">
    <location>
        <begin position="536"/>
        <end position="556"/>
    </location>
</feature>
<feature type="domain" description="MTTase N-terminal" evidence="5">
    <location>
        <begin position="60"/>
        <end position="168"/>
    </location>
</feature>
<feature type="domain" description="Radical SAM core" evidence="6">
    <location>
        <begin position="196"/>
        <end position="427"/>
    </location>
</feature>
<feature type="domain" description="TRAM" evidence="4">
    <location>
        <begin position="427"/>
        <end position="489"/>
    </location>
</feature>
<feature type="region of interest" description="Disordered" evidence="7">
    <location>
        <begin position="17"/>
        <end position="57"/>
    </location>
</feature>
<feature type="binding site" evidence="5">
    <location>
        <position position="69"/>
    </location>
    <ligand>
        <name>[4Fe-4S] cluster</name>
        <dbReference type="ChEBI" id="CHEBI:49883"/>
        <label>1</label>
    </ligand>
</feature>
<feature type="binding site" evidence="5">
    <location>
        <position position="105"/>
    </location>
    <ligand>
        <name>[4Fe-4S] cluster</name>
        <dbReference type="ChEBI" id="CHEBI:49883"/>
        <label>1</label>
    </ligand>
</feature>
<feature type="binding site" evidence="5">
    <location>
        <position position="134"/>
    </location>
    <ligand>
        <name>[4Fe-4S] cluster</name>
        <dbReference type="ChEBI" id="CHEBI:49883"/>
        <label>1</label>
    </ligand>
</feature>
<feature type="binding site" evidence="5">
    <location>
        <position position="210"/>
    </location>
    <ligand>
        <name>[4Fe-4S] cluster</name>
        <dbReference type="ChEBI" id="CHEBI:49883"/>
        <label>2</label>
        <note>4Fe-4S-S-AdoMet</note>
    </ligand>
</feature>
<feature type="binding site" evidence="5">
    <location>
        <position position="214"/>
    </location>
    <ligand>
        <name>[4Fe-4S] cluster</name>
        <dbReference type="ChEBI" id="CHEBI:49883"/>
        <label>2</label>
        <note>4Fe-4S-S-AdoMet</note>
    </ligand>
</feature>
<feature type="binding site" evidence="5">
    <location>
        <position position="217"/>
    </location>
    <ligand>
        <name>[4Fe-4S] cluster</name>
        <dbReference type="ChEBI" id="CHEBI:49883"/>
        <label>2</label>
        <note>4Fe-4S-S-AdoMet</note>
    </ligand>
</feature>
<name>CDKAL_XENLA</name>
<evidence type="ECO:0000250" key="1">
    <source>
        <dbReference type="UniProtKB" id="Q5VV42"/>
    </source>
</evidence>
<evidence type="ECO:0000250" key="2">
    <source>
        <dbReference type="UniProtKB" id="Q91WE6"/>
    </source>
</evidence>
<evidence type="ECO:0000255" key="3"/>
<evidence type="ECO:0000255" key="4">
    <source>
        <dbReference type="PROSITE-ProRule" id="PRU00208"/>
    </source>
</evidence>
<evidence type="ECO:0000255" key="5">
    <source>
        <dbReference type="PROSITE-ProRule" id="PRU00780"/>
    </source>
</evidence>
<evidence type="ECO:0000255" key="6">
    <source>
        <dbReference type="PROSITE-ProRule" id="PRU01266"/>
    </source>
</evidence>
<evidence type="ECO:0000256" key="7">
    <source>
        <dbReference type="SAM" id="MobiDB-lite"/>
    </source>
</evidence>
<evidence type="ECO:0000305" key="8"/>
<gene>
    <name type="primary">cdkal1</name>
</gene>
<protein>
    <recommendedName>
        <fullName>Threonylcarbamoyladenosine tRNA methylthiotransferase</fullName>
        <ecNumber evidence="2">2.8.4.5</ecNumber>
    </recommendedName>
    <alternativeName>
        <fullName>CDK5 regulatory subunit-associated protein 1-like 1</fullName>
    </alternativeName>
    <alternativeName>
        <fullName>tRNA-t(6)A37 methylthiotransferase</fullName>
    </alternativeName>
</protein>